<reference key="1">
    <citation type="journal article" date="1997" name="Plant Mol. Biol.">
        <title>cDNA cloning and differential gene expression of three catalases in pumpkin.</title>
        <authorList>
            <person name="Esaka M."/>
            <person name="Yamada N."/>
            <person name="Kitabayashi M."/>
            <person name="Setoguchi Y."/>
            <person name="Tsugeki R."/>
            <person name="Kondo M."/>
            <person name="Nishimura M."/>
        </authorList>
    </citation>
    <scope>NUCLEOTIDE SEQUENCE [MRNA]</scope>
    <source>
        <tissue>Cotyledon</tissue>
    </source>
</reference>
<evidence type="ECO:0000250" key="1"/>
<evidence type="ECO:0000255" key="2">
    <source>
        <dbReference type="PROSITE-ProRule" id="PRU10013"/>
    </source>
</evidence>
<evidence type="ECO:0000305" key="3"/>
<sequence>MDPYKYRPSSAYNTPFCTTNSGAPIWNNTAVMSVGERGPILLEDYQLIEKIATFTRERIPERVVHRRGASAKGFFEVTHDISNLTCADFLRAPGVQTPVIVRFSTVIHERGSPETLRDPRGFAVKFYTREGNFDLVGNNFPVFFVRDAMQFPDVIRAFKPNPKSHLQEPWRYLDFCSYHPESLLSFAWFYDDVGIPINYRHMEGFGVQAYSLINKSGKARLVKFHWKPTCGVKSMMEEEAIRIGGTNHSHATQDLYESIAAGNFPEWRLYIQTIDYEDQNKYDFEPLDTTITWPEDVVPLQPVGRLVLNKNIDNFFAENEMLAFSMSLVPGIHYSDDKMLQARSFAYADTQRHRLGPNYLQLPVNAPKCPHHNNHHEGFMNFMHRDEEVNYFPSRYDPCRHAEKFPMPPNVLTGKRERCVIPKENNNFKQAGDRYRSWAPDRQDRFVKRFVEALSDPRVTDEVRNIWISYWSQADRSLGQKIASRLNVRPNI</sequence>
<accession>P48352</accession>
<organism>
    <name type="scientific">Cucurbita pepo</name>
    <name type="common">Vegetable marrow</name>
    <name type="synonym">Summer squash</name>
    <dbReference type="NCBI Taxonomy" id="3663"/>
    <lineage>
        <taxon>Eukaryota</taxon>
        <taxon>Viridiplantae</taxon>
        <taxon>Streptophyta</taxon>
        <taxon>Embryophyta</taxon>
        <taxon>Tracheophyta</taxon>
        <taxon>Spermatophyta</taxon>
        <taxon>Magnoliopsida</taxon>
        <taxon>eudicotyledons</taxon>
        <taxon>Gunneridae</taxon>
        <taxon>Pentapetalae</taxon>
        <taxon>rosids</taxon>
        <taxon>fabids</taxon>
        <taxon>Cucurbitales</taxon>
        <taxon>Cucurbitaceae</taxon>
        <taxon>Cucurbiteae</taxon>
        <taxon>Cucurbita</taxon>
    </lineage>
</organism>
<proteinExistence type="evidence at transcript level"/>
<feature type="chain" id="PRO_0000084937" description="Catalase isozyme 3">
    <location>
        <begin position="1"/>
        <end position="492"/>
    </location>
</feature>
<feature type="active site" evidence="2">
    <location>
        <position position="65"/>
    </location>
</feature>
<feature type="active site" evidence="2">
    <location>
        <position position="138"/>
    </location>
</feature>
<feature type="binding site" description="axial binding residue" evidence="1">
    <location>
        <position position="347"/>
    </location>
    <ligand>
        <name>heme</name>
        <dbReference type="ChEBI" id="CHEBI:30413"/>
    </ligand>
    <ligandPart>
        <name>Fe</name>
        <dbReference type="ChEBI" id="CHEBI:18248"/>
    </ligandPart>
</feature>
<name>CATA3_CUCPE</name>
<gene>
    <name type="primary">CAT3</name>
</gene>
<keyword id="KW-0349">Heme</keyword>
<keyword id="KW-0376">Hydrogen peroxide</keyword>
<keyword id="KW-0408">Iron</keyword>
<keyword id="KW-0479">Metal-binding</keyword>
<keyword id="KW-0560">Oxidoreductase</keyword>
<keyword id="KW-0575">Peroxidase</keyword>
<keyword id="KW-0576">Peroxisome</keyword>
<protein>
    <recommendedName>
        <fullName>Catalase isozyme 3</fullName>
        <ecNumber>1.11.1.6</ecNumber>
    </recommendedName>
</protein>
<comment type="function">
    <text>Occurs in almost all aerobically respiring organisms and serves to protect cells from the toxic effects of hydrogen peroxide.</text>
</comment>
<comment type="catalytic activity">
    <reaction evidence="2">
        <text>2 H2O2 = O2 + 2 H2O</text>
        <dbReference type="Rhea" id="RHEA:20309"/>
        <dbReference type="ChEBI" id="CHEBI:15377"/>
        <dbReference type="ChEBI" id="CHEBI:15379"/>
        <dbReference type="ChEBI" id="CHEBI:16240"/>
        <dbReference type="EC" id="1.11.1.6"/>
    </reaction>
</comment>
<comment type="cofactor">
    <cofactor evidence="1">
        <name>heme</name>
        <dbReference type="ChEBI" id="CHEBI:30413"/>
    </cofactor>
</comment>
<comment type="subunit">
    <text evidence="1">Homotetramer.</text>
</comment>
<comment type="subcellular location">
    <subcellularLocation>
        <location evidence="1">Peroxisome</location>
    </subcellularLocation>
</comment>
<comment type="tissue specificity">
    <text>Abundant in green cotyledons, etiolated cotyledons, green hypocotyl and root, but not in young leaf.</text>
</comment>
<comment type="similarity">
    <text evidence="3">Belongs to the catalase family.</text>
</comment>
<dbReference type="EC" id="1.11.1.6"/>
<dbReference type="EMBL" id="D55647">
    <property type="protein sequence ID" value="BAA09508.1"/>
    <property type="molecule type" value="mRNA"/>
</dbReference>
<dbReference type="PIR" id="T09756">
    <property type="entry name" value="T09756"/>
</dbReference>
<dbReference type="SMR" id="P48352"/>
<dbReference type="GO" id="GO:0005777">
    <property type="term" value="C:peroxisome"/>
    <property type="evidence" value="ECO:0007669"/>
    <property type="project" value="UniProtKB-SubCell"/>
</dbReference>
<dbReference type="GO" id="GO:0005886">
    <property type="term" value="C:plasma membrane"/>
    <property type="evidence" value="ECO:0007669"/>
    <property type="project" value="TreeGrafter"/>
</dbReference>
<dbReference type="GO" id="GO:0004096">
    <property type="term" value="F:catalase activity"/>
    <property type="evidence" value="ECO:0007669"/>
    <property type="project" value="UniProtKB-EC"/>
</dbReference>
<dbReference type="GO" id="GO:0020037">
    <property type="term" value="F:heme binding"/>
    <property type="evidence" value="ECO:0007669"/>
    <property type="project" value="InterPro"/>
</dbReference>
<dbReference type="GO" id="GO:0046872">
    <property type="term" value="F:metal ion binding"/>
    <property type="evidence" value="ECO:0007669"/>
    <property type="project" value="UniProtKB-KW"/>
</dbReference>
<dbReference type="GO" id="GO:0042744">
    <property type="term" value="P:hydrogen peroxide catabolic process"/>
    <property type="evidence" value="ECO:0007669"/>
    <property type="project" value="UniProtKB-KW"/>
</dbReference>
<dbReference type="GO" id="GO:0042542">
    <property type="term" value="P:response to hydrogen peroxide"/>
    <property type="evidence" value="ECO:0007669"/>
    <property type="project" value="TreeGrafter"/>
</dbReference>
<dbReference type="CDD" id="cd08154">
    <property type="entry name" value="catalase_clade_1"/>
    <property type="match status" value="1"/>
</dbReference>
<dbReference type="FunFam" id="2.40.180.10:FF:000002">
    <property type="entry name" value="Catalase"/>
    <property type="match status" value="1"/>
</dbReference>
<dbReference type="Gene3D" id="2.40.180.10">
    <property type="entry name" value="Catalase core domain"/>
    <property type="match status" value="1"/>
</dbReference>
<dbReference type="InterPro" id="IPR018028">
    <property type="entry name" value="Catalase"/>
</dbReference>
<dbReference type="InterPro" id="IPR024708">
    <property type="entry name" value="Catalase_AS"/>
</dbReference>
<dbReference type="InterPro" id="IPR024711">
    <property type="entry name" value="Catalase_clade1/3"/>
</dbReference>
<dbReference type="InterPro" id="IPR011614">
    <property type="entry name" value="Catalase_core"/>
</dbReference>
<dbReference type="InterPro" id="IPR002226">
    <property type="entry name" value="Catalase_haem_BS"/>
</dbReference>
<dbReference type="InterPro" id="IPR010582">
    <property type="entry name" value="Catalase_immune_responsive"/>
</dbReference>
<dbReference type="InterPro" id="IPR020835">
    <property type="entry name" value="Catalase_sf"/>
</dbReference>
<dbReference type="PANTHER" id="PTHR11465">
    <property type="entry name" value="CATALASE"/>
    <property type="match status" value="1"/>
</dbReference>
<dbReference type="PANTHER" id="PTHR11465:SF49">
    <property type="entry name" value="CATALASE"/>
    <property type="match status" value="1"/>
</dbReference>
<dbReference type="Pfam" id="PF00199">
    <property type="entry name" value="Catalase"/>
    <property type="match status" value="1"/>
</dbReference>
<dbReference type="Pfam" id="PF06628">
    <property type="entry name" value="Catalase-rel"/>
    <property type="match status" value="1"/>
</dbReference>
<dbReference type="PIRSF" id="PIRSF038928">
    <property type="entry name" value="Catalase_clade1-3"/>
    <property type="match status" value="1"/>
</dbReference>
<dbReference type="PRINTS" id="PR00067">
    <property type="entry name" value="CATALASE"/>
</dbReference>
<dbReference type="SMART" id="SM01060">
    <property type="entry name" value="Catalase"/>
    <property type="match status" value="1"/>
</dbReference>
<dbReference type="SUPFAM" id="SSF56634">
    <property type="entry name" value="Heme-dependent catalase-like"/>
    <property type="match status" value="1"/>
</dbReference>
<dbReference type="PROSITE" id="PS00437">
    <property type="entry name" value="CATALASE_1"/>
    <property type="match status" value="1"/>
</dbReference>
<dbReference type="PROSITE" id="PS00438">
    <property type="entry name" value="CATALASE_2"/>
    <property type="match status" value="1"/>
</dbReference>
<dbReference type="PROSITE" id="PS51402">
    <property type="entry name" value="CATALASE_3"/>
    <property type="match status" value="1"/>
</dbReference>